<proteinExistence type="inferred from homology"/>
<comment type="function">
    <text evidence="1">Converts GTP to 7,8-dihydroneopterin triphosphate.</text>
</comment>
<comment type="catalytic activity">
    <reaction evidence="1">
        <text>GTP + H2O = 7,8-dihydroneopterin 3'-triphosphate + formate + H(+)</text>
        <dbReference type="Rhea" id="RHEA:17473"/>
        <dbReference type="ChEBI" id="CHEBI:15377"/>
        <dbReference type="ChEBI" id="CHEBI:15378"/>
        <dbReference type="ChEBI" id="CHEBI:15740"/>
        <dbReference type="ChEBI" id="CHEBI:37565"/>
        <dbReference type="ChEBI" id="CHEBI:58462"/>
        <dbReference type="EC" id="3.5.4.16"/>
    </reaction>
</comment>
<comment type="pathway">
    <text evidence="1">Cofactor biosynthesis; 7,8-dihydroneopterin triphosphate biosynthesis; 7,8-dihydroneopterin triphosphate from GTP: step 1/1.</text>
</comment>
<comment type="similarity">
    <text evidence="1">Belongs to the GTP cyclohydrolase IV family.</text>
</comment>
<keyword id="KW-0378">Hydrolase</keyword>
<name>GCH4_SERP5</name>
<sequence length="309" mass="33879">MNKVALPPTQPLPDAQAWQGAMSDVGLDWVGMQGIALPLELAGKPLMAKVNAGINLRASRHGARGIHMSRLYLTLDELTQGELTPQRIADSLRAFLASQPEHSDSASLSISGELMLSRPALLSAHRGWKAYPLKIDASLTTGLTLSLTVGVPYSSTCPSSAALSRQLAQQQFQFDFEQAPDKVSQQQVIDWLGEQGMPGTPHSQRSWAWVTVTLNEGEAELPVVNLIDRIEHALGTPLQTLVKRQDEQAFALANGQNLMFCEDAARRLYRMLRSQCHHRAFSLRVEHQESLHAHNAVAELSWQEAGNAA</sequence>
<dbReference type="EC" id="3.5.4.16" evidence="1"/>
<dbReference type="EMBL" id="CP000826">
    <property type="protein sequence ID" value="ABV41729.1"/>
    <property type="molecule type" value="Genomic_DNA"/>
</dbReference>
<dbReference type="SMR" id="A8GF39"/>
<dbReference type="STRING" id="399741.Spro_2628"/>
<dbReference type="KEGG" id="spe:Spro_2628"/>
<dbReference type="eggNOG" id="COG1469">
    <property type="taxonomic scope" value="Bacteria"/>
</dbReference>
<dbReference type="HOGENOM" id="CLU_062816_0_0_6"/>
<dbReference type="OrthoDB" id="239637at2"/>
<dbReference type="UniPathway" id="UPA00848">
    <property type="reaction ID" value="UER00151"/>
</dbReference>
<dbReference type="GO" id="GO:0003934">
    <property type="term" value="F:GTP cyclohydrolase I activity"/>
    <property type="evidence" value="ECO:0007669"/>
    <property type="project" value="UniProtKB-UniRule"/>
</dbReference>
<dbReference type="GO" id="GO:0046654">
    <property type="term" value="P:tetrahydrofolate biosynthetic process"/>
    <property type="evidence" value="ECO:0007669"/>
    <property type="project" value="UniProtKB-UniRule"/>
</dbReference>
<dbReference type="Gene3D" id="3.10.270.10">
    <property type="entry name" value="Urate Oxidase"/>
    <property type="match status" value="1"/>
</dbReference>
<dbReference type="HAMAP" id="MF_01527_B">
    <property type="entry name" value="GTP_cyclohydrol_B"/>
    <property type="match status" value="1"/>
</dbReference>
<dbReference type="InterPro" id="IPR022838">
    <property type="entry name" value="GTP_cyclohydrolase_FolE2"/>
</dbReference>
<dbReference type="InterPro" id="IPR003801">
    <property type="entry name" value="GTP_cyclohydrolase_FolE2/MptA"/>
</dbReference>
<dbReference type="NCBIfam" id="NF010200">
    <property type="entry name" value="PRK13674.1-1"/>
    <property type="match status" value="1"/>
</dbReference>
<dbReference type="PANTHER" id="PTHR36445">
    <property type="entry name" value="GTP CYCLOHYDROLASE MPTA"/>
    <property type="match status" value="1"/>
</dbReference>
<dbReference type="PANTHER" id="PTHR36445:SF1">
    <property type="entry name" value="GTP CYCLOHYDROLASE MPTA"/>
    <property type="match status" value="1"/>
</dbReference>
<dbReference type="Pfam" id="PF02649">
    <property type="entry name" value="GCHY-1"/>
    <property type="match status" value="1"/>
</dbReference>
<organism>
    <name type="scientific">Serratia proteamaculans (strain 568)</name>
    <dbReference type="NCBI Taxonomy" id="399741"/>
    <lineage>
        <taxon>Bacteria</taxon>
        <taxon>Pseudomonadati</taxon>
        <taxon>Pseudomonadota</taxon>
        <taxon>Gammaproteobacteria</taxon>
        <taxon>Enterobacterales</taxon>
        <taxon>Yersiniaceae</taxon>
        <taxon>Serratia</taxon>
    </lineage>
</organism>
<reference key="1">
    <citation type="submission" date="2007-09" db="EMBL/GenBank/DDBJ databases">
        <title>Complete sequence of chromosome of Serratia proteamaculans 568.</title>
        <authorList>
            <consortium name="US DOE Joint Genome Institute"/>
            <person name="Copeland A."/>
            <person name="Lucas S."/>
            <person name="Lapidus A."/>
            <person name="Barry K."/>
            <person name="Glavina del Rio T."/>
            <person name="Dalin E."/>
            <person name="Tice H."/>
            <person name="Pitluck S."/>
            <person name="Chain P."/>
            <person name="Malfatti S."/>
            <person name="Shin M."/>
            <person name="Vergez L."/>
            <person name="Schmutz J."/>
            <person name="Larimer F."/>
            <person name="Land M."/>
            <person name="Hauser L."/>
            <person name="Kyrpides N."/>
            <person name="Kim E."/>
            <person name="Taghavi S."/>
            <person name="Newman L."/>
            <person name="Vangronsveld J."/>
            <person name="van der Lelie D."/>
            <person name="Richardson P."/>
        </authorList>
    </citation>
    <scope>NUCLEOTIDE SEQUENCE [LARGE SCALE GENOMIC DNA]</scope>
    <source>
        <strain>568</strain>
    </source>
</reference>
<gene>
    <name evidence="1" type="primary">folE2</name>
    <name type="ordered locus">Spro_2628</name>
</gene>
<feature type="chain" id="PRO_0000318553" description="GTP cyclohydrolase FolE2">
    <location>
        <begin position="1"/>
        <end position="309"/>
    </location>
</feature>
<feature type="site" description="May be catalytically important" evidence="1">
    <location>
        <position position="157"/>
    </location>
</feature>
<evidence type="ECO:0000255" key="1">
    <source>
        <dbReference type="HAMAP-Rule" id="MF_01527"/>
    </source>
</evidence>
<protein>
    <recommendedName>
        <fullName evidence="1">GTP cyclohydrolase FolE2</fullName>
        <ecNumber evidence="1">3.5.4.16</ecNumber>
    </recommendedName>
</protein>
<accession>A8GF39</accession>